<keyword id="KW-0002">3D-structure</keyword>
<keyword id="KW-0025">Alternative splicing</keyword>
<keyword id="KW-0067">ATP-binding</keyword>
<keyword id="KW-0112">Calmodulin-binding</keyword>
<keyword id="KW-0418">Kinase</keyword>
<keyword id="KW-0547">Nucleotide-binding</keyword>
<keyword id="KW-0597">Phosphoprotein</keyword>
<keyword id="KW-1185">Reference proteome</keyword>
<keyword id="KW-0723">Serine/threonine-protein kinase</keyword>
<keyword id="KW-0808">Transferase</keyword>
<name>KCC2A_DROME</name>
<gene>
    <name type="primary">CaMKII</name>
    <name type="synonym">CaM</name>
    <name type="ORF">CG18069</name>
</gene>
<protein>
    <recommendedName>
        <fullName>Calcium/calmodulin-dependent protein kinase type II alpha chain</fullName>
        <shortName>CaM-kinase II alpha chain</shortName>
        <ecNumber>2.7.11.17</ecNumber>
    </recommendedName>
</protein>
<organism>
    <name type="scientific">Drosophila melanogaster</name>
    <name type="common">Fruit fly</name>
    <dbReference type="NCBI Taxonomy" id="7227"/>
    <lineage>
        <taxon>Eukaryota</taxon>
        <taxon>Metazoa</taxon>
        <taxon>Ecdysozoa</taxon>
        <taxon>Arthropoda</taxon>
        <taxon>Hexapoda</taxon>
        <taxon>Insecta</taxon>
        <taxon>Pterygota</taxon>
        <taxon>Neoptera</taxon>
        <taxon>Endopterygota</taxon>
        <taxon>Diptera</taxon>
        <taxon>Brachycera</taxon>
        <taxon>Muscomorpha</taxon>
        <taxon>Ephydroidea</taxon>
        <taxon>Drosophilidae</taxon>
        <taxon>Drosophila</taxon>
        <taxon>Sophophora</taxon>
    </lineage>
</organism>
<dbReference type="EC" id="2.7.11.17"/>
<dbReference type="EMBL" id="D13330">
    <property type="protein sequence ID" value="BAA02593.1"/>
    <property type="molecule type" value="mRNA"/>
</dbReference>
<dbReference type="EMBL" id="D13331">
    <property type="protein sequence ID" value="BAA02594.1"/>
    <property type="molecule type" value="mRNA"/>
</dbReference>
<dbReference type="EMBL" id="D13332">
    <property type="protein sequence ID" value="BAA02595.1"/>
    <property type="molecule type" value="mRNA"/>
</dbReference>
<dbReference type="EMBL" id="D13333">
    <property type="protein sequence ID" value="BAA02596.1"/>
    <property type="molecule type" value="mRNA"/>
</dbReference>
<dbReference type="EMBL" id="M74583">
    <property type="protein sequence ID" value="AAA51459.1"/>
    <property type="molecule type" value="mRNA"/>
</dbReference>
<dbReference type="EMBL" id="AE014135">
    <property type="protein sequence ID" value="AAF59388.3"/>
    <property type="molecule type" value="Genomic_DNA"/>
</dbReference>
<dbReference type="EMBL" id="AE014135">
    <property type="protein sequence ID" value="AAF59390.2"/>
    <property type="molecule type" value="Genomic_DNA"/>
</dbReference>
<dbReference type="EMBL" id="AE014135">
    <property type="protein sequence ID" value="AAN06568.2"/>
    <property type="molecule type" value="Genomic_DNA"/>
</dbReference>
<dbReference type="EMBL" id="AE014135">
    <property type="protein sequence ID" value="AAX53595.1"/>
    <property type="molecule type" value="Genomic_DNA"/>
</dbReference>
<dbReference type="EMBL" id="S65712">
    <property type="protein sequence ID" value="AAB28244.1"/>
    <property type="molecule type" value="mRNA"/>
</dbReference>
<dbReference type="EMBL" id="S65716">
    <property type="protein sequence ID" value="AAB28245.1"/>
    <property type="molecule type" value="mRNA"/>
</dbReference>
<dbReference type="EMBL" id="S65717">
    <property type="protein sequence ID" value="AAB28246.2"/>
    <property type="molecule type" value="mRNA"/>
</dbReference>
<dbReference type="EMBL" id="S65719">
    <property type="protein sequence ID" value="AAB28247.1"/>
    <property type="molecule type" value="mRNA"/>
</dbReference>
<dbReference type="EMBL" id="S65724">
    <property type="protein sequence ID" value="AAB28248.2"/>
    <property type="molecule type" value="mRNA"/>
</dbReference>
<dbReference type="PIR" id="B44412">
    <property type="entry name" value="B44412"/>
</dbReference>
<dbReference type="PIR" id="C44412">
    <property type="entry name" value="JU0270"/>
</dbReference>
<dbReference type="PIR" id="D44412">
    <property type="entry name" value="D44412"/>
</dbReference>
<dbReference type="RefSeq" id="NP_001014696.1">
    <molecule id="Q00168-2"/>
    <property type="nucleotide sequence ID" value="NM_001014696.2"/>
</dbReference>
<dbReference type="RefSeq" id="NP_001162831.1">
    <molecule id="Q00168-4"/>
    <property type="nucleotide sequence ID" value="NM_001169360.2"/>
</dbReference>
<dbReference type="RefSeq" id="NP_001162832.1">
    <molecule id="Q00168-1"/>
    <property type="nucleotide sequence ID" value="NM_001169361.2"/>
</dbReference>
<dbReference type="RefSeq" id="NP_524635.3">
    <molecule id="Q00168-4"/>
    <property type="nucleotide sequence ID" value="NM_079896.4"/>
</dbReference>
<dbReference type="RefSeq" id="NP_726633.2">
    <molecule id="Q00168-4"/>
    <property type="nucleotide sequence ID" value="NM_166810.5"/>
</dbReference>
<dbReference type="RefSeq" id="NP_726634.1">
    <molecule id="Q00168-3"/>
    <property type="nucleotide sequence ID" value="NM_166811.2"/>
</dbReference>
<dbReference type="RefSeq" id="NP_726635.2">
    <molecule id="Q00168-1"/>
    <property type="nucleotide sequence ID" value="NM_166812.3"/>
</dbReference>
<dbReference type="RefSeq" id="NP_726636.2">
    <molecule id="Q00168-3"/>
    <property type="nucleotide sequence ID" value="NM_166813.3"/>
</dbReference>
<dbReference type="PDB" id="5FG8">
    <property type="method" value="X-ray"/>
    <property type="resolution" value="1.96 A"/>
    <property type="chains" value="A=1-283"/>
</dbReference>
<dbReference type="PDB" id="5H9B">
    <property type="method" value="X-ray"/>
    <property type="resolution" value="2.25 A"/>
    <property type="chains" value="A=1-283"/>
</dbReference>
<dbReference type="PDB" id="5HU3">
    <property type="method" value="X-ray"/>
    <property type="resolution" value="1.89 A"/>
    <property type="chains" value="A=1-283"/>
</dbReference>
<dbReference type="PDBsum" id="5FG8"/>
<dbReference type="PDBsum" id="5H9B"/>
<dbReference type="PDBsum" id="5HU3"/>
<dbReference type="SMR" id="Q00168"/>
<dbReference type="BioGRID" id="68654">
    <property type="interactions" value="31"/>
</dbReference>
<dbReference type="FunCoup" id="Q00168">
    <property type="interactions" value="238"/>
</dbReference>
<dbReference type="IntAct" id="Q00168">
    <property type="interactions" value="5"/>
</dbReference>
<dbReference type="MINT" id="Q00168"/>
<dbReference type="STRING" id="7227.FBpp0289608"/>
<dbReference type="GlyGen" id="Q00168">
    <property type="glycosylation" value="1 site"/>
</dbReference>
<dbReference type="iPTMnet" id="Q00168"/>
<dbReference type="PaxDb" id="7227-FBpp0289608"/>
<dbReference type="DNASU" id="43828"/>
<dbReference type="EnsemblMetazoa" id="FBtr0089217">
    <molecule id="Q00168-4"/>
    <property type="protein sequence ID" value="FBpp0088281"/>
    <property type="gene ID" value="FBgn0264607"/>
</dbReference>
<dbReference type="EnsemblMetazoa" id="FBtr0089218">
    <molecule id="Q00168-4"/>
    <property type="protein sequence ID" value="FBpp0088282"/>
    <property type="gene ID" value="FBgn0264607"/>
</dbReference>
<dbReference type="EnsemblMetazoa" id="FBtr0089219">
    <molecule id="Q00168-3"/>
    <property type="protein sequence ID" value="FBpp0088283"/>
    <property type="gene ID" value="FBgn0264607"/>
</dbReference>
<dbReference type="EnsemblMetazoa" id="FBtr0100146">
    <molecule id="Q00168-1"/>
    <property type="protein sequence ID" value="FBpp0099496"/>
    <property type="gene ID" value="FBgn0264607"/>
</dbReference>
<dbReference type="EnsemblMetazoa" id="FBtr0100147">
    <molecule id="Q00168-3"/>
    <property type="protein sequence ID" value="FBpp0099497"/>
    <property type="gene ID" value="FBgn0264607"/>
</dbReference>
<dbReference type="EnsemblMetazoa" id="FBtr0100148">
    <molecule id="Q00168-2"/>
    <property type="protein sequence ID" value="FBpp0099498"/>
    <property type="gene ID" value="FBgn0264607"/>
</dbReference>
<dbReference type="EnsemblMetazoa" id="FBtr0300377">
    <molecule id="Q00168-4"/>
    <property type="protein sequence ID" value="FBpp0289606"/>
    <property type="gene ID" value="FBgn0264607"/>
</dbReference>
<dbReference type="EnsemblMetazoa" id="FBtr0300378">
    <molecule id="Q00168-1"/>
    <property type="protein sequence ID" value="FBpp0289607"/>
    <property type="gene ID" value="FBgn0264607"/>
</dbReference>
<dbReference type="GeneID" id="43828"/>
<dbReference type="KEGG" id="dme:Dmel_CG18069"/>
<dbReference type="AGR" id="FB:FBgn0264607"/>
<dbReference type="CTD" id="43828"/>
<dbReference type="FlyBase" id="FBgn0264607">
    <property type="gene designation" value="CaMKII"/>
</dbReference>
<dbReference type="VEuPathDB" id="VectorBase:FBgn0264607"/>
<dbReference type="eggNOG" id="KOG0033">
    <property type="taxonomic scope" value="Eukaryota"/>
</dbReference>
<dbReference type="GeneTree" id="ENSGT00940000159769"/>
<dbReference type="InParanoid" id="Q00168"/>
<dbReference type="OrthoDB" id="442176at2759"/>
<dbReference type="PhylomeDB" id="Q00168"/>
<dbReference type="BRENDA" id="2.7.11.17">
    <property type="organism ID" value="1994"/>
</dbReference>
<dbReference type="Reactome" id="R-DME-3371571">
    <property type="pathway name" value="HSF1-dependent transactivation"/>
</dbReference>
<dbReference type="Reactome" id="R-DME-4086398">
    <property type="pathway name" value="Ca2+ pathway"/>
</dbReference>
<dbReference type="Reactome" id="R-DME-438066">
    <property type="pathway name" value="Unblocking of NMDA receptors, glutamate binding and activation"/>
</dbReference>
<dbReference type="Reactome" id="R-DME-5578775">
    <property type="pathway name" value="Ion homeostasis"/>
</dbReference>
<dbReference type="Reactome" id="R-DME-5673000">
    <property type="pathway name" value="RAF activation"/>
</dbReference>
<dbReference type="Reactome" id="R-DME-936837">
    <property type="pathway name" value="Ion transport by P-type ATPases"/>
</dbReference>
<dbReference type="SignaLink" id="Q00168"/>
<dbReference type="BioGRID-ORCS" id="43828">
    <property type="hits" value="0 hits in 3 CRISPR screens"/>
</dbReference>
<dbReference type="GenomeRNAi" id="43828"/>
<dbReference type="PRO" id="PR:Q00168"/>
<dbReference type="Proteomes" id="UP000000803">
    <property type="component" value="Chromosome 4"/>
</dbReference>
<dbReference type="Bgee" id="FBgn0264607">
    <property type="expression patterns" value="Expressed in adult neuron in open tracheal system trachea and 307 other cell types or tissues"/>
</dbReference>
<dbReference type="ExpressionAtlas" id="Q00168">
    <property type="expression patterns" value="baseline and differential"/>
</dbReference>
<dbReference type="GO" id="GO:0030424">
    <property type="term" value="C:axon"/>
    <property type="evidence" value="ECO:0000314"/>
    <property type="project" value="FlyBase"/>
</dbReference>
<dbReference type="GO" id="GO:0005737">
    <property type="term" value="C:cytoplasm"/>
    <property type="evidence" value="ECO:0007005"/>
    <property type="project" value="FlyBase"/>
</dbReference>
<dbReference type="GO" id="GO:0030425">
    <property type="term" value="C:dendrite"/>
    <property type="evidence" value="ECO:0000314"/>
    <property type="project" value="FlyBase"/>
</dbReference>
<dbReference type="GO" id="GO:0043005">
    <property type="term" value="C:neuron projection"/>
    <property type="evidence" value="ECO:0000318"/>
    <property type="project" value="GO_Central"/>
</dbReference>
<dbReference type="GO" id="GO:0014069">
    <property type="term" value="C:postsynaptic density"/>
    <property type="evidence" value="ECO:0000318"/>
    <property type="project" value="GO_Central"/>
</dbReference>
<dbReference type="GO" id="GO:0045211">
    <property type="term" value="C:postsynaptic membrane"/>
    <property type="evidence" value="ECO:0000314"/>
    <property type="project" value="FlyBase"/>
</dbReference>
<dbReference type="GO" id="GO:0048786">
    <property type="term" value="C:presynaptic active zone"/>
    <property type="evidence" value="ECO:0000314"/>
    <property type="project" value="FlyBase"/>
</dbReference>
<dbReference type="GO" id="GO:0005524">
    <property type="term" value="F:ATP binding"/>
    <property type="evidence" value="ECO:0007669"/>
    <property type="project" value="UniProtKB-KW"/>
</dbReference>
<dbReference type="GO" id="GO:0004683">
    <property type="term" value="F:calcium/calmodulin-dependent protein kinase activity"/>
    <property type="evidence" value="ECO:0000314"/>
    <property type="project" value="FlyBase"/>
</dbReference>
<dbReference type="GO" id="GO:0005516">
    <property type="term" value="F:calmodulin binding"/>
    <property type="evidence" value="ECO:0000318"/>
    <property type="project" value="GO_Central"/>
</dbReference>
<dbReference type="GO" id="GO:0106310">
    <property type="term" value="F:protein serine kinase activity"/>
    <property type="evidence" value="ECO:0007669"/>
    <property type="project" value="RHEA"/>
</dbReference>
<dbReference type="GO" id="GO:0004674">
    <property type="term" value="F:protein serine/threonine kinase activity"/>
    <property type="evidence" value="ECO:0000314"/>
    <property type="project" value="FlyBase"/>
</dbReference>
<dbReference type="GO" id="GO:0009267">
    <property type="term" value="P:cellular response to starvation"/>
    <property type="evidence" value="ECO:0000315"/>
    <property type="project" value="FlyBase"/>
</dbReference>
<dbReference type="GO" id="GO:0007268">
    <property type="term" value="P:chemical synaptic transmission"/>
    <property type="evidence" value="ECO:0000315"/>
    <property type="project" value="FlyBase"/>
</dbReference>
<dbReference type="GO" id="GO:0007619">
    <property type="term" value="P:courtship behavior"/>
    <property type="evidence" value="ECO:0000304"/>
    <property type="project" value="FlyBase"/>
</dbReference>
<dbReference type="GO" id="GO:0007611">
    <property type="term" value="P:learning or memory"/>
    <property type="evidence" value="ECO:0000315"/>
    <property type="project" value="FlyBase"/>
</dbReference>
<dbReference type="GO" id="GO:0007616">
    <property type="term" value="P:long-term memory"/>
    <property type="evidence" value="ECO:0000315"/>
    <property type="project" value="FlyBase"/>
</dbReference>
<dbReference type="GO" id="GO:0008049">
    <property type="term" value="P:male courtship behavior"/>
    <property type="evidence" value="ECO:0000315"/>
    <property type="project" value="FlyBase"/>
</dbReference>
<dbReference type="GO" id="GO:2001234">
    <property type="term" value="P:negative regulation of apoptotic signaling pathway"/>
    <property type="evidence" value="ECO:0000314"/>
    <property type="project" value="FlyBase"/>
</dbReference>
<dbReference type="GO" id="GO:0001818">
    <property type="term" value="P:negative regulation of cytokine production"/>
    <property type="evidence" value="ECO:0000315"/>
    <property type="project" value="FlyBase"/>
</dbReference>
<dbReference type="GO" id="GO:0010888">
    <property type="term" value="P:negative regulation of lipid storage"/>
    <property type="evidence" value="ECO:0000315"/>
    <property type="project" value="FlyBase"/>
</dbReference>
<dbReference type="GO" id="GO:0007528">
    <property type="term" value="P:neuromuscular junction development"/>
    <property type="evidence" value="ECO:0000303"/>
    <property type="project" value="FlyBase"/>
</dbReference>
<dbReference type="GO" id="GO:0032226">
    <property type="term" value="P:positive regulation of synaptic transmission, dopaminergic"/>
    <property type="evidence" value="ECO:0000315"/>
    <property type="project" value="UniProtKB"/>
</dbReference>
<dbReference type="GO" id="GO:0051489">
    <property type="term" value="P:regulation of filopodium assembly"/>
    <property type="evidence" value="ECO:0000315"/>
    <property type="project" value="FlyBase"/>
</dbReference>
<dbReference type="GO" id="GO:0048168">
    <property type="term" value="P:regulation of neuronal synaptic plasticity"/>
    <property type="evidence" value="ECO:0000318"/>
    <property type="project" value="GO_Central"/>
</dbReference>
<dbReference type="GO" id="GO:0060278">
    <property type="term" value="P:regulation of ovulation"/>
    <property type="evidence" value="ECO:0000316"/>
    <property type="project" value="FlyBase"/>
</dbReference>
<dbReference type="GO" id="GO:1903076">
    <property type="term" value="P:regulation of protein localization to plasma membrane"/>
    <property type="evidence" value="ECO:0000318"/>
    <property type="project" value="GO_Central"/>
</dbReference>
<dbReference type="GO" id="GO:0008582">
    <property type="term" value="P:regulation of synaptic assembly at neuromuscular junction"/>
    <property type="evidence" value="ECO:0000315"/>
    <property type="project" value="FlyBase"/>
</dbReference>
<dbReference type="CDD" id="cd14086">
    <property type="entry name" value="STKc_CaMKII"/>
    <property type="match status" value="1"/>
</dbReference>
<dbReference type="FunFam" id="3.10.450.50:FF:000009">
    <property type="entry name" value="Calcium/calmodulin-dependent protein kinase type II"/>
    <property type="match status" value="1"/>
</dbReference>
<dbReference type="FunFam" id="1.10.510.10:FF:000001">
    <property type="entry name" value="Calcium/calmodulin-dependent protein kinase type II subunit delta"/>
    <property type="match status" value="1"/>
</dbReference>
<dbReference type="FunFam" id="3.30.200.20:FF:000002">
    <property type="entry name" value="Calcium/calmodulin-dependent protein kinase type II subunit delta isoform 2"/>
    <property type="match status" value="1"/>
</dbReference>
<dbReference type="Gene3D" id="3.10.450.50">
    <property type="match status" value="1"/>
</dbReference>
<dbReference type="Gene3D" id="6.10.140.620">
    <property type="match status" value="1"/>
</dbReference>
<dbReference type="Gene3D" id="3.30.200.20">
    <property type="entry name" value="Phosphorylase Kinase, domain 1"/>
    <property type="match status" value="1"/>
</dbReference>
<dbReference type="Gene3D" id="1.10.510.10">
    <property type="entry name" value="Transferase(Phosphotransferase) domain 1"/>
    <property type="match status" value="1"/>
</dbReference>
<dbReference type="InterPro" id="IPR013543">
    <property type="entry name" value="Ca/CaM-dep_prot_kinase-assoc"/>
</dbReference>
<dbReference type="InterPro" id="IPR011009">
    <property type="entry name" value="Kinase-like_dom_sf"/>
</dbReference>
<dbReference type="InterPro" id="IPR032710">
    <property type="entry name" value="NTF2-like_dom_sf"/>
</dbReference>
<dbReference type="InterPro" id="IPR000719">
    <property type="entry name" value="Prot_kinase_dom"/>
</dbReference>
<dbReference type="InterPro" id="IPR017441">
    <property type="entry name" value="Protein_kinase_ATP_BS"/>
</dbReference>
<dbReference type="InterPro" id="IPR008271">
    <property type="entry name" value="Ser/Thr_kinase_AS"/>
</dbReference>
<dbReference type="PANTHER" id="PTHR24347">
    <property type="entry name" value="SERINE/THREONINE-PROTEIN KINASE"/>
    <property type="match status" value="1"/>
</dbReference>
<dbReference type="Pfam" id="PF08332">
    <property type="entry name" value="CaMKII_AD"/>
    <property type="match status" value="1"/>
</dbReference>
<dbReference type="Pfam" id="PF00069">
    <property type="entry name" value="Pkinase"/>
    <property type="match status" value="1"/>
</dbReference>
<dbReference type="SMART" id="SM00220">
    <property type="entry name" value="S_TKc"/>
    <property type="match status" value="1"/>
</dbReference>
<dbReference type="SUPFAM" id="SSF54427">
    <property type="entry name" value="NTF2-like"/>
    <property type="match status" value="1"/>
</dbReference>
<dbReference type="SUPFAM" id="SSF56112">
    <property type="entry name" value="Protein kinase-like (PK-like)"/>
    <property type="match status" value="1"/>
</dbReference>
<dbReference type="PROSITE" id="PS00107">
    <property type="entry name" value="PROTEIN_KINASE_ATP"/>
    <property type="match status" value="1"/>
</dbReference>
<dbReference type="PROSITE" id="PS50011">
    <property type="entry name" value="PROTEIN_KINASE_DOM"/>
    <property type="match status" value="1"/>
</dbReference>
<dbReference type="PROSITE" id="PS00108">
    <property type="entry name" value="PROTEIN_KINASE_ST"/>
    <property type="match status" value="1"/>
</dbReference>
<accession>Q00168</accession>
<accession>Q59DP1</accession>
<accession>Q59DP2</accession>
<accession>Q9V495</accession>
<feature type="chain" id="PRO_0000086095" description="Calcium/calmodulin-dependent protein kinase type II alpha chain">
    <location>
        <begin position="1"/>
        <end position="530"/>
    </location>
</feature>
<feature type="domain" description="Protein kinase" evidence="1">
    <location>
        <begin position="12"/>
        <end position="272"/>
    </location>
</feature>
<feature type="region of interest" description="Calmodulin-binding">
    <location>
        <begin position="291"/>
        <end position="301"/>
    </location>
</feature>
<feature type="region of interest" description="Disordered" evidence="3">
    <location>
        <begin position="320"/>
        <end position="358"/>
    </location>
</feature>
<feature type="active site" description="Proton acceptor" evidence="1 2">
    <location>
        <position position="136"/>
    </location>
</feature>
<feature type="binding site" evidence="1">
    <location>
        <begin position="20"/>
        <end position="28"/>
    </location>
    <ligand>
        <name>ATP</name>
        <dbReference type="ChEBI" id="CHEBI:30616"/>
    </ligand>
</feature>
<feature type="binding site" evidence="1">
    <location>
        <position position="43"/>
    </location>
    <ligand>
        <name>ATP</name>
        <dbReference type="ChEBI" id="CHEBI:30616"/>
    </ligand>
</feature>
<feature type="modified residue" description="Phosphothreonine; by autocatalysis" evidence="5 6">
    <location>
        <position position="287"/>
    </location>
</feature>
<feature type="modified residue" description="Phosphothreonine; by autocatalysis" evidence="5">
    <location>
        <position position="306"/>
    </location>
</feature>
<feature type="modified residue" description="Phosphothreonine; by autocatalysis" evidence="5">
    <location>
        <position position="307"/>
    </location>
</feature>
<feature type="modified residue" description="Phosphoserine" evidence="7">
    <location>
        <position position="327"/>
    </location>
</feature>
<feature type="splice variant" id="VSP_050261" description="In isoform 4." evidence="10 11">
    <location>
        <begin position="347"/>
        <end position="386"/>
    </location>
</feature>
<feature type="splice variant" id="VSP_050262" description="In isoform 2." evidence="11">
    <original>DIRILCPAKTYQQNIGNSQCSS</original>
    <variation>VNLFTNKA</variation>
    <location>
        <begin position="366"/>
        <end position="387"/>
    </location>
</feature>
<feature type="splice variant" id="VSP_050263" description="In isoform 3." evidence="11">
    <original>DIRILCPAKTYQQNIGNSQCSS</original>
    <variation>A</variation>
    <location>
        <begin position="366"/>
        <end position="387"/>
    </location>
</feature>
<feature type="splice variant" id="VSP_050264" description="In isoform 4." evidence="10 11">
    <original>S</original>
    <variation>A</variation>
    <location>
        <position position="387"/>
    </location>
</feature>
<feature type="mutagenesis site" description="Fails to interact with CASK, catalytically active but fails to autophosphorylate, when associated with A-307." evidence="5">
    <original>T</original>
    <variation>A</variation>
    <location>
        <position position="306"/>
    </location>
</feature>
<feature type="mutagenesis site" description="Fails to interact with CASK, kinase inactive, when associated with D-307." evidence="5">
    <original>T</original>
    <variation>D</variation>
    <location>
        <position position="306"/>
    </location>
</feature>
<feature type="mutagenesis site" description="Fails to interact with CASK, catalytically active and can autophosphorylate, when associated with S-307." evidence="5">
    <original>T</original>
    <variation>S</variation>
    <location>
        <position position="306"/>
    </location>
</feature>
<feature type="mutagenesis site" description="Fails to interact with CASK, catalytically active but fails to autophosphorylate, when associated with A-306." evidence="5">
    <original>T</original>
    <variation>A</variation>
    <location>
        <position position="307"/>
    </location>
</feature>
<feature type="mutagenesis site" description="Fails to interact with CASK, kinase inactive, when associated with D-306." evidence="5">
    <original>T</original>
    <variation>D</variation>
    <location>
        <position position="307"/>
    </location>
</feature>
<feature type="mutagenesis site" description="Fails to interact with CASK, catalytically active and can autophosphorylate, when associated with S-306." evidence="5">
    <original>T</original>
    <variation>S</variation>
    <location>
        <position position="307"/>
    </location>
</feature>
<feature type="sequence conflict" description="In Ref. 2; AAB28246/AAB28248." evidence="12" ref="2">
    <original>A</original>
    <variation>S</variation>
    <location>
        <position position="388"/>
    </location>
</feature>
<feature type="helix" evidence="14">
    <location>
        <begin position="9"/>
        <end position="13"/>
    </location>
</feature>
<feature type="strand" evidence="14">
    <location>
        <begin position="14"/>
        <end position="23"/>
    </location>
</feature>
<feature type="strand" evidence="14">
    <location>
        <begin position="26"/>
        <end position="33"/>
    </location>
</feature>
<feature type="turn" evidence="14">
    <location>
        <begin position="34"/>
        <end position="36"/>
    </location>
</feature>
<feature type="strand" evidence="14">
    <location>
        <begin position="39"/>
        <end position="46"/>
    </location>
</feature>
<feature type="helix" evidence="14">
    <location>
        <begin position="52"/>
        <end position="67"/>
    </location>
</feature>
<feature type="strand" evidence="14">
    <location>
        <begin position="76"/>
        <end position="81"/>
    </location>
</feature>
<feature type="strand" evidence="14">
    <location>
        <begin position="83"/>
        <end position="91"/>
    </location>
</feature>
<feature type="helix" evidence="14">
    <location>
        <begin position="98"/>
        <end position="105"/>
    </location>
</feature>
<feature type="helix" evidence="14">
    <location>
        <begin position="110"/>
        <end position="128"/>
    </location>
</feature>
<feature type="turn" evidence="14">
    <location>
        <begin position="129"/>
        <end position="131"/>
    </location>
</feature>
<feature type="helix" evidence="14">
    <location>
        <begin position="139"/>
        <end position="141"/>
    </location>
</feature>
<feature type="strand" evidence="14">
    <location>
        <begin position="142"/>
        <end position="145"/>
    </location>
</feature>
<feature type="strand" evidence="14">
    <location>
        <begin position="153"/>
        <end position="155"/>
    </location>
</feature>
<feature type="strand" evidence="14">
    <location>
        <begin position="174"/>
        <end position="176"/>
    </location>
</feature>
<feature type="helix" evidence="14">
    <location>
        <begin position="178"/>
        <end position="180"/>
    </location>
</feature>
<feature type="helix" evidence="14">
    <location>
        <begin position="183"/>
        <end position="186"/>
    </location>
</feature>
<feature type="helix" evidence="14">
    <location>
        <begin position="194"/>
        <end position="209"/>
    </location>
</feature>
<feature type="helix" evidence="14">
    <location>
        <begin position="219"/>
        <end position="228"/>
    </location>
</feature>
<feature type="turn" evidence="14">
    <location>
        <begin position="235"/>
        <end position="240"/>
    </location>
</feature>
<feature type="helix" evidence="14">
    <location>
        <begin position="243"/>
        <end position="252"/>
    </location>
</feature>
<feature type="turn" evidence="13">
    <location>
        <begin position="257"/>
        <end position="259"/>
    </location>
</feature>
<feature type="helix" evidence="14">
    <location>
        <begin position="263"/>
        <end position="266"/>
    </location>
</feature>
<feature type="helix" evidence="13">
    <location>
        <begin position="270"/>
        <end position="273"/>
    </location>
</feature>
<sequence>MAAPAACTRFSDNYDIKEELGKGAFSIVKRCVQKSTGFEFAAKIINTKKLTARDFQKLEREARICRKLHHPNIVRLHDSIQEENYHYLVFDLVTGGELFEDIVAREFYSEADASHCIQQILESVNHCHQNGVVHRDLKPENLLLASKAKGAAVKLADFGLAIEVQGDHQAWFGFAGTPGYLSPEVLKKEPYGKSVDIWACGVILYILLVGYPPFWDEDQHRLYSQIKAGAYDYPSPEWDTVTPEAKNLINQMLTVNPNKRITAAEALKHPWICQRERVASVVHRQETVDCLKKFNARRKLKGAILTTMLATRNFSSRSMITKKGEGSQVKESTDSSSTTLEDDDIKEDKKGTVDRSTTVVSKEPEDIRILCPAKTYQQNIGNSQCSSARRQEIIKITEQLIEAINSGDFDGYTKICDPHLTAFEPEALGNLVEGIDFHKFYFENVLGKNCKAINTTILNPHVHLLGEEAACIAYVRLTQYIDKQGHAHTHQSEETRVWHKRDNKWQNVHFHRSASAKISGATTFDFIPQK</sequence>
<evidence type="ECO:0000255" key="1">
    <source>
        <dbReference type="PROSITE-ProRule" id="PRU00159"/>
    </source>
</evidence>
<evidence type="ECO:0000255" key="2">
    <source>
        <dbReference type="PROSITE-ProRule" id="PRU10027"/>
    </source>
</evidence>
<evidence type="ECO:0000256" key="3">
    <source>
        <dbReference type="SAM" id="MobiDB-lite"/>
    </source>
</evidence>
<evidence type="ECO:0000269" key="4">
    <source>
    </source>
</evidence>
<evidence type="ECO:0000269" key="5">
    <source>
    </source>
</evidence>
<evidence type="ECO:0000269" key="6">
    <source>
    </source>
</evidence>
<evidence type="ECO:0000269" key="7">
    <source>
    </source>
</evidence>
<evidence type="ECO:0000269" key="8">
    <source>
    </source>
</evidence>
<evidence type="ECO:0000269" key="9">
    <source>
    </source>
</evidence>
<evidence type="ECO:0000303" key="10">
    <source>
    </source>
</evidence>
<evidence type="ECO:0000303" key="11">
    <source>
    </source>
</evidence>
<evidence type="ECO:0000305" key="12"/>
<evidence type="ECO:0007829" key="13">
    <source>
        <dbReference type="PDB" id="5FG8"/>
    </source>
</evidence>
<evidence type="ECO:0007829" key="14">
    <source>
        <dbReference type="PDB" id="5HU3"/>
    </source>
</evidence>
<comment type="function">
    <text evidence="4 5">A key regulator of plasticity in synaptic physiology and behavior, alterations in its activity produce pleiotrophic effects that involve synaptic transmission and development as well as various aspects of behavior. Directly modulates eag potassium channels.</text>
</comment>
<comment type="catalytic activity">
    <reaction>
        <text>L-seryl-[protein] + ATP = O-phospho-L-seryl-[protein] + ADP + H(+)</text>
        <dbReference type="Rhea" id="RHEA:17989"/>
        <dbReference type="Rhea" id="RHEA-COMP:9863"/>
        <dbReference type="Rhea" id="RHEA-COMP:11604"/>
        <dbReference type="ChEBI" id="CHEBI:15378"/>
        <dbReference type="ChEBI" id="CHEBI:29999"/>
        <dbReference type="ChEBI" id="CHEBI:30616"/>
        <dbReference type="ChEBI" id="CHEBI:83421"/>
        <dbReference type="ChEBI" id="CHEBI:456216"/>
        <dbReference type="EC" id="2.7.11.17"/>
    </reaction>
</comment>
<comment type="catalytic activity">
    <reaction>
        <text>L-threonyl-[protein] + ATP = O-phospho-L-threonyl-[protein] + ADP + H(+)</text>
        <dbReference type="Rhea" id="RHEA:46608"/>
        <dbReference type="Rhea" id="RHEA-COMP:11060"/>
        <dbReference type="Rhea" id="RHEA-COMP:11605"/>
        <dbReference type="ChEBI" id="CHEBI:15378"/>
        <dbReference type="ChEBI" id="CHEBI:30013"/>
        <dbReference type="ChEBI" id="CHEBI:30616"/>
        <dbReference type="ChEBI" id="CHEBI:61977"/>
        <dbReference type="ChEBI" id="CHEBI:456216"/>
        <dbReference type="EC" id="2.7.11.17"/>
    </reaction>
</comment>
<comment type="activity regulation">
    <text evidence="6">CASK plays a role in regulation of CaMKII autophosphorylation. When complexed with CASK and in the presence Ca[2+]/CaM, autophosphorylation of Thr-287 causes constitutive activation of the kinase. In the absence of Ca[2+]/CaM, autophosphorylation of Thr-306 causes inactivation of the kinase.</text>
</comment>
<comment type="subunit">
    <text evidence="5">Interacts with CASK.</text>
</comment>
<comment type="interaction">
    <interactant intactId="EBI-124595">
        <id>Q00168</id>
    </interactant>
    <interactant intactId="EBI-214423">
        <id>Q24210</id>
        <label>CASK</label>
    </interactant>
    <organismsDiffer>false</organismsDiffer>
    <experiments>5</experiments>
</comment>
<comment type="alternative products">
    <event type="alternative splicing"/>
    <isoform>
        <id>Q00168-1</id>
        <name>1</name>
        <name>530aa</name>
        <name>D</name>
        <sequence type="displayed"/>
    </isoform>
    <isoform>
        <id>Q00168-2</id>
        <name>2</name>
        <name>516aa</name>
        <name>G</name>
        <sequence type="described" ref="VSP_050262"/>
    </isoform>
    <isoform>
        <id>Q00168-3</id>
        <name>3</name>
        <name>509aa</name>
        <name>B</name>
        <name>E</name>
        <sequence type="described" ref="VSP_050263"/>
    </isoform>
    <isoform>
        <id>Q00168-4</id>
        <name>4</name>
        <name>490aa</name>
        <name>A</name>
        <name>C</name>
        <sequence type="described" ref="VSP_050261 VSP_050264"/>
    </isoform>
</comment>
<comment type="tissue specificity">
    <text evidence="8 9">Expressed at a high level in the central nervous system during the late embryonic stage. In adults, expression is more abundant in the head than in the body.</text>
</comment>
<comment type="PTM">
    <text evidence="5 6 7">Autophosphorylation at Thr-287 is independent of autophosphorylation at Thr-306 and Thr-307.</text>
</comment>
<comment type="similarity">
    <text evidence="12">Belongs to the protein kinase superfamily. CAMK Ser/Thr protein kinase family. CaMK subfamily.</text>
</comment>
<comment type="online information" name="Wikipedia">
    <link uri="https://en.wikipedia.org/wiki/Calmodulin_dependent_kinase"/>
    <text>Calmodulin-dependent kinase entry</text>
</comment>
<reference key="1">
    <citation type="journal article" date="1993" name="J. Biol. Chem.">
        <title>Molecular characterization and expression of the Drosophila Ca2+/calmodulin-dependent protein kinase II gene. Identification of four forms of the enzyme generated from a single gene by alternative splicing.</title>
        <authorList>
            <person name="Ohsako S."/>
            <person name="Nishida Y."/>
            <person name="Ryo H."/>
            <person name="Yamauchi T."/>
        </authorList>
    </citation>
    <scope>NUCLEOTIDE SEQUENCE [MRNA] (ISOFORMS 1; 2; 3 AND 4)</scope>
    <scope>TISSUE SPECIFICITY</scope>
    <source>
        <tissue>Head</tissue>
    </source>
</reference>
<reference key="2">
    <citation type="journal article" date="1991" name="Neuron">
        <title>The alpha subunit of type II Ca2+/calmodulin-dependent protein kinase is highly conserved in Drosophila.</title>
        <authorList>
            <person name="Cho K.O."/>
            <person name="Wall J.B."/>
            <person name="Pugh P.C."/>
            <person name="Ito M."/>
            <person name="Mueller S.A."/>
            <person name="Kennedy M.B."/>
        </authorList>
    </citation>
    <scope>NUCLEOTIDE SEQUENCE [MRNA] (ISOFORM 4)</scope>
    <scope>TISSUE SPECIFICITY</scope>
    <source>
        <tissue>Head</tissue>
    </source>
</reference>
<reference key="3">
    <citation type="journal article" date="2000" name="Science">
        <title>The genome sequence of Drosophila melanogaster.</title>
        <authorList>
            <person name="Adams M.D."/>
            <person name="Celniker S.E."/>
            <person name="Holt R.A."/>
            <person name="Evans C.A."/>
            <person name="Gocayne J.D."/>
            <person name="Amanatides P.G."/>
            <person name="Scherer S.E."/>
            <person name="Li P.W."/>
            <person name="Hoskins R.A."/>
            <person name="Galle R.F."/>
            <person name="George R.A."/>
            <person name="Lewis S.E."/>
            <person name="Richards S."/>
            <person name="Ashburner M."/>
            <person name="Henderson S.N."/>
            <person name="Sutton G.G."/>
            <person name="Wortman J.R."/>
            <person name="Yandell M.D."/>
            <person name="Zhang Q."/>
            <person name="Chen L.X."/>
            <person name="Brandon R.C."/>
            <person name="Rogers Y.-H.C."/>
            <person name="Blazej R.G."/>
            <person name="Champe M."/>
            <person name="Pfeiffer B.D."/>
            <person name="Wan K.H."/>
            <person name="Doyle C."/>
            <person name="Baxter E.G."/>
            <person name="Helt G."/>
            <person name="Nelson C.R."/>
            <person name="Miklos G.L.G."/>
            <person name="Abril J.F."/>
            <person name="Agbayani A."/>
            <person name="An H.-J."/>
            <person name="Andrews-Pfannkoch C."/>
            <person name="Baldwin D."/>
            <person name="Ballew R.M."/>
            <person name="Basu A."/>
            <person name="Baxendale J."/>
            <person name="Bayraktaroglu L."/>
            <person name="Beasley E.M."/>
            <person name="Beeson K.Y."/>
            <person name="Benos P.V."/>
            <person name="Berman B.P."/>
            <person name="Bhandari D."/>
            <person name="Bolshakov S."/>
            <person name="Borkova D."/>
            <person name="Botchan M.R."/>
            <person name="Bouck J."/>
            <person name="Brokstein P."/>
            <person name="Brottier P."/>
            <person name="Burtis K.C."/>
            <person name="Busam D.A."/>
            <person name="Butler H."/>
            <person name="Cadieu E."/>
            <person name="Center A."/>
            <person name="Chandra I."/>
            <person name="Cherry J.M."/>
            <person name="Cawley S."/>
            <person name="Dahlke C."/>
            <person name="Davenport L.B."/>
            <person name="Davies P."/>
            <person name="de Pablos B."/>
            <person name="Delcher A."/>
            <person name="Deng Z."/>
            <person name="Mays A.D."/>
            <person name="Dew I."/>
            <person name="Dietz S.M."/>
            <person name="Dodson K."/>
            <person name="Doup L.E."/>
            <person name="Downes M."/>
            <person name="Dugan-Rocha S."/>
            <person name="Dunkov B.C."/>
            <person name="Dunn P."/>
            <person name="Durbin K.J."/>
            <person name="Evangelista C.C."/>
            <person name="Ferraz C."/>
            <person name="Ferriera S."/>
            <person name="Fleischmann W."/>
            <person name="Fosler C."/>
            <person name="Gabrielian A.E."/>
            <person name="Garg N.S."/>
            <person name="Gelbart W.M."/>
            <person name="Glasser K."/>
            <person name="Glodek A."/>
            <person name="Gong F."/>
            <person name="Gorrell J.H."/>
            <person name="Gu Z."/>
            <person name="Guan P."/>
            <person name="Harris M."/>
            <person name="Harris N.L."/>
            <person name="Harvey D.A."/>
            <person name="Heiman T.J."/>
            <person name="Hernandez J.R."/>
            <person name="Houck J."/>
            <person name="Hostin D."/>
            <person name="Houston K.A."/>
            <person name="Howland T.J."/>
            <person name="Wei M.-H."/>
            <person name="Ibegwam C."/>
            <person name="Jalali M."/>
            <person name="Kalush F."/>
            <person name="Karpen G.H."/>
            <person name="Ke Z."/>
            <person name="Kennison J.A."/>
            <person name="Ketchum K.A."/>
            <person name="Kimmel B.E."/>
            <person name="Kodira C.D."/>
            <person name="Kraft C.L."/>
            <person name="Kravitz S."/>
            <person name="Kulp D."/>
            <person name="Lai Z."/>
            <person name="Lasko P."/>
            <person name="Lei Y."/>
            <person name="Levitsky A.A."/>
            <person name="Li J.H."/>
            <person name="Li Z."/>
            <person name="Liang Y."/>
            <person name="Lin X."/>
            <person name="Liu X."/>
            <person name="Mattei B."/>
            <person name="McIntosh T.C."/>
            <person name="McLeod M.P."/>
            <person name="McPherson D."/>
            <person name="Merkulov G."/>
            <person name="Milshina N.V."/>
            <person name="Mobarry C."/>
            <person name="Morris J."/>
            <person name="Moshrefi A."/>
            <person name="Mount S.M."/>
            <person name="Moy M."/>
            <person name="Murphy B."/>
            <person name="Murphy L."/>
            <person name="Muzny D.M."/>
            <person name="Nelson D.L."/>
            <person name="Nelson D.R."/>
            <person name="Nelson K.A."/>
            <person name="Nixon K."/>
            <person name="Nusskern D.R."/>
            <person name="Pacleb J.M."/>
            <person name="Palazzolo M."/>
            <person name="Pittman G.S."/>
            <person name="Pan S."/>
            <person name="Pollard J."/>
            <person name="Puri V."/>
            <person name="Reese M.G."/>
            <person name="Reinert K."/>
            <person name="Remington K."/>
            <person name="Saunders R.D.C."/>
            <person name="Scheeler F."/>
            <person name="Shen H."/>
            <person name="Shue B.C."/>
            <person name="Siden-Kiamos I."/>
            <person name="Simpson M."/>
            <person name="Skupski M.P."/>
            <person name="Smith T.J."/>
            <person name="Spier E."/>
            <person name="Spradling A.C."/>
            <person name="Stapleton M."/>
            <person name="Strong R."/>
            <person name="Sun E."/>
            <person name="Svirskas R."/>
            <person name="Tector C."/>
            <person name="Turner R."/>
            <person name="Venter E."/>
            <person name="Wang A.H."/>
            <person name="Wang X."/>
            <person name="Wang Z.-Y."/>
            <person name="Wassarman D.A."/>
            <person name="Weinstock G.M."/>
            <person name="Weissenbach J."/>
            <person name="Williams S.M."/>
            <person name="Woodage T."/>
            <person name="Worley K.C."/>
            <person name="Wu D."/>
            <person name="Yang S."/>
            <person name="Yao Q.A."/>
            <person name="Ye J."/>
            <person name="Yeh R.-F."/>
            <person name="Zaveri J.S."/>
            <person name="Zhan M."/>
            <person name="Zhang G."/>
            <person name="Zhao Q."/>
            <person name="Zheng L."/>
            <person name="Zheng X.H."/>
            <person name="Zhong F.N."/>
            <person name="Zhong W."/>
            <person name="Zhou X."/>
            <person name="Zhu S.C."/>
            <person name="Zhu X."/>
            <person name="Smith H.O."/>
            <person name="Gibbs R.A."/>
            <person name="Myers E.W."/>
            <person name="Rubin G.M."/>
            <person name="Venter J.C."/>
        </authorList>
    </citation>
    <scope>NUCLEOTIDE SEQUENCE [LARGE SCALE GENOMIC DNA]</scope>
    <source>
        <strain>Berkeley</strain>
    </source>
</reference>
<reference key="4">
    <citation type="journal article" date="2002" name="Genome Biol.">
        <title>Annotation of the Drosophila melanogaster euchromatic genome: a systematic review.</title>
        <authorList>
            <person name="Misra S."/>
            <person name="Crosby M.A."/>
            <person name="Mungall C.J."/>
            <person name="Matthews B.B."/>
            <person name="Campbell K.S."/>
            <person name="Hradecky P."/>
            <person name="Huang Y."/>
            <person name="Kaminker J.S."/>
            <person name="Millburn G.H."/>
            <person name="Prochnik S.E."/>
            <person name="Smith C.D."/>
            <person name="Tupy J.L."/>
            <person name="Whitfield E.J."/>
            <person name="Bayraktaroglu L."/>
            <person name="Berman B.P."/>
            <person name="Bettencourt B.R."/>
            <person name="Celniker S.E."/>
            <person name="de Grey A.D.N.J."/>
            <person name="Drysdale R.A."/>
            <person name="Harris N.L."/>
            <person name="Richter J."/>
            <person name="Russo S."/>
            <person name="Schroeder A.J."/>
            <person name="Shu S.Q."/>
            <person name="Stapleton M."/>
            <person name="Yamada C."/>
            <person name="Ashburner M."/>
            <person name="Gelbart W.M."/>
            <person name="Rubin G.M."/>
            <person name="Lewis S.E."/>
        </authorList>
    </citation>
    <scope>GENOME REANNOTATION</scope>
    <scope>ALTERNATIVE SPLICING</scope>
    <source>
        <strain>Berkeley</strain>
    </source>
</reference>
<reference key="5">
    <citation type="journal article" date="1993" name="J. Neurochem.">
        <title>The diversity of calcium/calmodulin-dependent protein kinase II isoforms in Drosophila is generated by alternative splicing of a single gene.</title>
        <authorList>
            <person name="Griffith L.C."/>
            <person name="Greenspan R.J."/>
        </authorList>
    </citation>
    <scope>NUCLEOTIDE SEQUENCE [MRNA] OF 347-388</scope>
</reference>
<reference key="6">
    <citation type="journal article" date="2002" name="J. Biol. Chem.">
        <title>Calcium/calmodulin-dependent protein kinase II phosphorylates and regulates the Drosophila eag potassium channel.</title>
        <authorList>
            <person name="Wang Z."/>
            <person name="Wilson G.F."/>
            <person name="Griffith L.C."/>
        </authorList>
    </citation>
    <scope>FUNCTION</scope>
</reference>
<reference key="7">
    <citation type="journal article" date="2003" name="Neuron">
        <title>Regulation of the Ca2+/CaM-responsive pool of CaMKII by scaffold-dependent autophosphorylation.</title>
        <authorList>
            <person name="Lu C.S."/>
            <person name="Hodge J.J."/>
            <person name="Mehren J."/>
            <person name="Sun X.X."/>
            <person name="Griffith L.C."/>
        </authorList>
    </citation>
    <scope>FUNCTION</scope>
    <scope>INTERACTION WITH CASK</scope>
    <scope>PHOSPHORYLATION AT THR-287; THR-306 AND THR-307</scope>
    <scope>MUTAGENESIS OF THR-306 AND THR-307</scope>
</reference>
<reference key="8">
    <citation type="journal article" date="2006" name="Neuron">
        <title>Activity-dependent gating of CaMKII autonomous activity by Drosophila CASK.</title>
        <authorList>
            <person name="Hodge J.J."/>
            <person name="Mullasseril P."/>
            <person name="Griffith L.C."/>
        </authorList>
    </citation>
    <scope>PHOSPHORYLATION AT THR-287</scope>
    <scope>ACTIVITY REGULATION</scope>
</reference>
<reference key="9">
    <citation type="journal article" date="2008" name="J. Proteome Res.">
        <title>Phosphoproteome analysis of Drosophila melanogaster embryos.</title>
        <authorList>
            <person name="Zhai B."/>
            <person name="Villen J."/>
            <person name="Beausoleil S.A."/>
            <person name="Mintseris J."/>
            <person name="Gygi S.P."/>
        </authorList>
    </citation>
    <scope>PHOSPHORYLATION [LARGE SCALE ANALYSIS] AT SER-327</scope>
    <scope>IDENTIFICATION BY MASS SPECTROMETRY</scope>
    <source>
        <tissue>Embryo</tissue>
    </source>
</reference>
<proteinExistence type="evidence at protein level"/>